<protein>
    <recommendedName>
        <fullName evidence="1">3-dehydroquinate synthase</fullName>
        <shortName evidence="1">DHQ synthase</shortName>
        <ecNumber evidence="1">1.4.1.24</ecNumber>
    </recommendedName>
    <alternativeName>
        <fullName evidence="1">3-dehydroquinate synthase II</fullName>
    </alternativeName>
</protein>
<proteinExistence type="inferred from homology"/>
<feature type="chain" id="PRO_0000058768" description="3-dehydroquinate synthase">
    <location>
        <begin position="1"/>
        <end position="380"/>
    </location>
</feature>
<keyword id="KW-0028">Amino-acid biosynthesis</keyword>
<keyword id="KW-0057">Aromatic amino acid biosynthesis</keyword>
<keyword id="KW-0520">NAD</keyword>
<keyword id="KW-0560">Oxidoreductase</keyword>
<keyword id="KW-1185">Reference proteome</keyword>
<dbReference type="EC" id="1.4.1.24" evidence="1"/>
<dbReference type="EMBL" id="AE010299">
    <property type="protein sequence ID" value="AAM07931.1"/>
    <property type="molecule type" value="Genomic_DNA"/>
</dbReference>
<dbReference type="RefSeq" id="WP_011024465.1">
    <property type="nucleotide sequence ID" value="NC_003552.1"/>
</dbReference>
<dbReference type="FunCoup" id="Q8THC5">
    <property type="interactions" value="7"/>
</dbReference>
<dbReference type="STRING" id="188937.MA_4592"/>
<dbReference type="EnsemblBacteria" id="AAM07931">
    <property type="protein sequence ID" value="AAM07931"/>
    <property type="gene ID" value="MA_4592"/>
</dbReference>
<dbReference type="GeneID" id="1476486"/>
<dbReference type="KEGG" id="mac:MA_4592"/>
<dbReference type="HOGENOM" id="CLU_056379_0_0_2"/>
<dbReference type="InParanoid" id="Q8THC5"/>
<dbReference type="OrthoDB" id="10265at2157"/>
<dbReference type="PhylomeDB" id="Q8THC5"/>
<dbReference type="Proteomes" id="UP000002487">
    <property type="component" value="Chromosome"/>
</dbReference>
<dbReference type="GO" id="GO:0003856">
    <property type="term" value="F:3-dehydroquinate synthase activity"/>
    <property type="evidence" value="ECO:0007669"/>
    <property type="project" value="InterPro"/>
</dbReference>
<dbReference type="GO" id="GO:0102042">
    <property type="term" value="F:dehydroquinate synthase activity"/>
    <property type="evidence" value="ECO:0007669"/>
    <property type="project" value="UniProtKB-EC"/>
</dbReference>
<dbReference type="GO" id="GO:0051287">
    <property type="term" value="F:NAD binding"/>
    <property type="evidence" value="ECO:0007669"/>
    <property type="project" value="UniProtKB-UniRule"/>
</dbReference>
<dbReference type="GO" id="GO:0008652">
    <property type="term" value="P:amino acid biosynthetic process"/>
    <property type="evidence" value="ECO:0007669"/>
    <property type="project" value="UniProtKB-KW"/>
</dbReference>
<dbReference type="GO" id="GO:0009073">
    <property type="term" value="P:aromatic amino acid family biosynthetic process"/>
    <property type="evidence" value="ECO:0007669"/>
    <property type="project" value="UniProtKB-UniRule"/>
</dbReference>
<dbReference type="Gene3D" id="3.20.20.70">
    <property type="entry name" value="Aldolase class I"/>
    <property type="match status" value="1"/>
</dbReference>
<dbReference type="HAMAP" id="MF_01244">
    <property type="entry name" value="Arch_DHQ_synthase"/>
    <property type="match status" value="1"/>
</dbReference>
<dbReference type="InterPro" id="IPR013785">
    <property type="entry name" value="Aldolase_TIM"/>
</dbReference>
<dbReference type="InterPro" id="IPR002812">
    <property type="entry name" value="DHQ_synth"/>
</dbReference>
<dbReference type="NCBIfam" id="NF002626">
    <property type="entry name" value="PRK02290.1-4"/>
    <property type="match status" value="1"/>
</dbReference>
<dbReference type="PANTHER" id="PTHR33563">
    <property type="match status" value="1"/>
</dbReference>
<dbReference type="PANTHER" id="PTHR33563:SF1">
    <property type="entry name" value="3-DEHYDROQUINATE SYNTHASE"/>
    <property type="match status" value="1"/>
</dbReference>
<dbReference type="Pfam" id="PF01959">
    <property type="entry name" value="DHQS"/>
    <property type="match status" value="1"/>
</dbReference>
<dbReference type="PIRSF" id="PIRSF006655">
    <property type="entry name" value="DHQ_synth"/>
    <property type="match status" value="1"/>
</dbReference>
<name>DHQS_METAC</name>
<evidence type="ECO:0000255" key="1">
    <source>
        <dbReference type="HAMAP-Rule" id="MF_01244"/>
    </source>
</evidence>
<accession>Q8THC5</accession>
<gene>
    <name evidence="1" type="primary">aroB'</name>
    <name type="ordered locus">MA_4592</name>
</gene>
<reference key="1">
    <citation type="journal article" date="2002" name="Genome Res.">
        <title>The genome of Methanosarcina acetivorans reveals extensive metabolic and physiological diversity.</title>
        <authorList>
            <person name="Galagan J.E."/>
            <person name="Nusbaum C."/>
            <person name="Roy A."/>
            <person name="Endrizzi M.G."/>
            <person name="Macdonald P."/>
            <person name="FitzHugh W."/>
            <person name="Calvo S."/>
            <person name="Engels R."/>
            <person name="Smirnov S."/>
            <person name="Atnoor D."/>
            <person name="Brown A."/>
            <person name="Allen N."/>
            <person name="Naylor J."/>
            <person name="Stange-Thomann N."/>
            <person name="DeArellano K."/>
            <person name="Johnson R."/>
            <person name="Linton L."/>
            <person name="McEwan P."/>
            <person name="McKernan K."/>
            <person name="Talamas J."/>
            <person name="Tirrell A."/>
            <person name="Ye W."/>
            <person name="Zimmer A."/>
            <person name="Barber R.D."/>
            <person name="Cann I."/>
            <person name="Graham D.E."/>
            <person name="Grahame D.A."/>
            <person name="Guss A.M."/>
            <person name="Hedderich R."/>
            <person name="Ingram-Smith C."/>
            <person name="Kuettner H.C."/>
            <person name="Krzycki J.A."/>
            <person name="Leigh J.A."/>
            <person name="Li W."/>
            <person name="Liu J."/>
            <person name="Mukhopadhyay B."/>
            <person name="Reeve J.N."/>
            <person name="Smith K."/>
            <person name="Springer T.A."/>
            <person name="Umayam L.A."/>
            <person name="White O."/>
            <person name="White R.H."/>
            <person name="de Macario E.C."/>
            <person name="Ferry J.G."/>
            <person name="Jarrell K.F."/>
            <person name="Jing H."/>
            <person name="Macario A.J.L."/>
            <person name="Paulsen I.T."/>
            <person name="Pritchett M."/>
            <person name="Sowers K.R."/>
            <person name="Swanson R.V."/>
            <person name="Zinder S.H."/>
            <person name="Lander E."/>
            <person name="Metcalf W.W."/>
            <person name="Birren B."/>
        </authorList>
    </citation>
    <scope>NUCLEOTIDE SEQUENCE [LARGE SCALE GENOMIC DNA]</scope>
    <source>
        <strain>ATCC 35395 / DSM 2834 / JCM 12185 / C2A</strain>
    </source>
</reference>
<organism>
    <name type="scientific">Methanosarcina acetivorans (strain ATCC 35395 / DSM 2834 / JCM 12185 / C2A)</name>
    <dbReference type="NCBI Taxonomy" id="188937"/>
    <lineage>
        <taxon>Archaea</taxon>
        <taxon>Methanobacteriati</taxon>
        <taxon>Methanobacteriota</taxon>
        <taxon>Stenosarchaea group</taxon>
        <taxon>Methanomicrobia</taxon>
        <taxon>Methanosarcinales</taxon>
        <taxon>Methanosarcinaceae</taxon>
        <taxon>Methanosarcina</taxon>
    </lineage>
</organism>
<comment type="function">
    <text evidence="1">Catalyzes the oxidative deamination and cyclization of 2-amino-3,7-dideoxy-D-threo-hept-6-ulosonic acid (ADH) to yield 3-dehydroquinate (DHQ), which is fed into the canonical shikimic pathway of aromatic amino acid biosynthesis.</text>
</comment>
<comment type="catalytic activity">
    <reaction evidence="1">
        <text>2-amino-2,3,7-trideoxy-D-lyxo-hept-6-ulosonate + NAD(+) + H2O = 3-dehydroquinate + NH4(+) + NADH + H(+)</text>
        <dbReference type="Rhea" id="RHEA:25956"/>
        <dbReference type="ChEBI" id="CHEBI:15377"/>
        <dbReference type="ChEBI" id="CHEBI:15378"/>
        <dbReference type="ChEBI" id="CHEBI:28938"/>
        <dbReference type="ChEBI" id="CHEBI:32364"/>
        <dbReference type="ChEBI" id="CHEBI:57540"/>
        <dbReference type="ChEBI" id="CHEBI:57945"/>
        <dbReference type="ChEBI" id="CHEBI:58859"/>
        <dbReference type="EC" id="1.4.1.24"/>
    </reaction>
</comment>
<comment type="similarity">
    <text evidence="1">Belongs to the archaeal-type DHQ synthase family.</text>
</comment>
<sequence length="380" mass="41353">MKKKSVWIKADEGGWEEQKDRITTGLESGADCVLVNPGDVEKVRELGNITVAAFARDNKSRADIVVVGKRGEGDGTKPLPQEIPGSFDINAATLLMDKGVTVGGYVVIKDKHYEHFAAEMGKICDYLLVTGTDWKVIPLENLIADLQHQKVKIIFGVKSAEEARLAFQTLEAGADGVLLDSGNPQEIKDTIKAARELESESAELEAAVVTRVEPLGMGDRVCVDTCNLMQRGEGMLIGSQASGMFLVNSESDDSPYVAARPFRVNAGAVHSYIKIGEKTRYLSELRAGDPVTIVDSKGKQREGIVGRVKIESRPLMLIEAKARDRTLTAILQNAETIKLVGKDGTPISVAKLEKGDEVLVRLEEGARHFGKKIEETIIEK</sequence>